<organism>
    <name type="scientific">Escherichia coli O6:K15:H31 (strain 536 / UPEC)</name>
    <dbReference type="NCBI Taxonomy" id="362663"/>
    <lineage>
        <taxon>Bacteria</taxon>
        <taxon>Pseudomonadati</taxon>
        <taxon>Pseudomonadota</taxon>
        <taxon>Gammaproteobacteria</taxon>
        <taxon>Enterobacterales</taxon>
        <taxon>Enterobacteriaceae</taxon>
        <taxon>Escherichia</taxon>
    </lineage>
</organism>
<protein>
    <recommendedName>
        <fullName evidence="1">Xaa-Pro dipeptidase</fullName>
        <shortName evidence="1">X-Pro dipeptidase</shortName>
        <ecNumber evidence="1">3.4.13.9</ecNumber>
    </recommendedName>
    <alternativeName>
        <fullName evidence="1">Imidodipeptidase</fullName>
    </alternativeName>
    <alternativeName>
        <fullName evidence="1">Proline dipeptidase</fullName>
        <shortName evidence="1">Prolidase</shortName>
    </alternativeName>
</protein>
<keyword id="KW-0224">Dipeptidase</keyword>
<keyword id="KW-0378">Hydrolase</keyword>
<keyword id="KW-0464">Manganese</keyword>
<keyword id="KW-0479">Metal-binding</keyword>
<keyword id="KW-0482">Metalloprotease</keyword>
<keyword id="KW-0645">Protease</keyword>
<dbReference type="EC" id="3.4.13.9" evidence="1"/>
<dbReference type="EMBL" id="CP000247">
    <property type="protein sequence ID" value="ABG72020.1"/>
    <property type="molecule type" value="Genomic_DNA"/>
</dbReference>
<dbReference type="RefSeq" id="WP_000444545.1">
    <property type="nucleotide sequence ID" value="NC_008253.1"/>
</dbReference>
<dbReference type="SMR" id="Q0TAK9"/>
<dbReference type="MEROPS" id="M24.003"/>
<dbReference type="KEGG" id="ecp:ECP_4060"/>
<dbReference type="HOGENOM" id="CLU_050675_0_0_6"/>
<dbReference type="Proteomes" id="UP000009182">
    <property type="component" value="Chromosome"/>
</dbReference>
<dbReference type="GO" id="GO:0005829">
    <property type="term" value="C:cytosol"/>
    <property type="evidence" value="ECO:0007669"/>
    <property type="project" value="TreeGrafter"/>
</dbReference>
<dbReference type="GO" id="GO:0004177">
    <property type="term" value="F:aminopeptidase activity"/>
    <property type="evidence" value="ECO:0007669"/>
    <property type="project" value="TreeGrafter"/>
</dbReference>
<dbReference type="GO" id="GO:0046872">
    <property type="term" value="F:metal ion binding"/>
    <property type="evidence" value="ECO:0007669"/>
    <property type="project" value="UniProtKB-KW"/>
</dbReference>
<dbReference type="GO" id="GO:0008235">
    <property type="term" value="F:metalloexopeptidase activity"/>
    <property type="evidence" value="ECO:0007669"/>
    <property type="project" value="UniProtKB-UniRule"/>
</dbReference>
<dbReference type="GO" id="GO:0016795">
    <property type="term" value="F:phosphoric triester hydrolase activity"/>
    <property type="evidence" value="ECO:0007669"/>
    <property type="project" value="InterPro"/>
</dbReference>
<dbReference type="GO" id="GO:0102009">
    <property type="term" value="F:proline dipeptidase activity"/>
    <property type="evidence" value="ECO:0007669"/>
    <property type="project" value="UniProtKB-EC"/>
</dbReference>
<dbReference type="GO" id="GO:0006508">
    <property type="term" value="P:proteolysis"/>
    <property type="evidence" value="ECO:0007669"/>
    <property type="project" value="UniProtKB-KW"/>
</dbReference>
<dbReference type="CDD" id="cd01087">
    <property type="entry name" value="Prolidase"/>
    <property type="match status" value="1"/>
</dbReference>
<dbReference type="FunFam" id="3.40.350.10:FF:000002">
    <property type="entry name" value="Xaa-Pro dipeptidase"/>
    <property type="match status" value="1"/>
</dbReference>
<dbReference type="FunFam" id="3.90.230.10:FF:000006">
    <property type="entry name" value="Xaa-Pro dipeptidase"/>
    <property type="match status" value="1"/>
</dbReference>
<dbReference type="Gene3D" id="3.90.230.10">
    <property type="entry name" value="Creatinase/methionine aminopeptidase superfamily"/>
    <property type="match status" value="1"/>
</dbReference>
<dbReference type="Gene3D" id="3.40.350.10">
    <property type="entry name" value="Creatinase/prolidase N-terminal domain"/>
    <property type="match status" value="1"/>
</dbReference>
<dbReference type="HAMAP" id="MF_01279">
    <property type="entry name" value="X_Pro_dipeptid"/>
    <property type="match status" value="1"/>
</dbReference>
<dbReference type="InterPro" id="IPR029149">
    <property type="entry name" value="Creatin/AminoP/Spt16_N"/>
</dbReference>
<dbReference type="InterPro" id="IPR036005">
    <property type="entry name" value="Creatinase/aminopeptidase-like"/>
</dbReference>
<dbReference type="InterPro" id="IPR048819">
    <property type="entry name" value="PepQ_N"/>
</dbReference>
<dbReference type="InterPro" id="IPR000994">
    <property type="entry name" value="Pept_M24"/>
</dbReference>
<dbReference type="InterPro" id="IPR001131">
    <property type="entry name" value="Peptidase_M24B_aminopep-P_CS"/>
</dbReference>
<dbReference type="InterPro" id="IPR052433">
    <property type="entry name" value="X-Pro_dipept-like"/>
</dbReference>
<dbReference type="InterPro" id="IPR022846">
    <property type="entry name" value="X_Pro_dipept"/>
</dbReference>
<dbReference type="NCBIfam" id="NF010133">
    <property type="entry name" value="PRK13607.1"/>
    <property type="match status" value="1"/>
</dbReference>
<dbReference type="PANTHER" id="PTHR43226">
    <property type="entry name" value="XAA-PRO AMINOPEPTIDASE 3"/>
    <property type="match status" value="1"/>
</dbReference>
<dbReference type="PANTHER" id="PTHR43226:SF8">
    <property type="entry name" value="XAA-PRO DIPEPTIDASE"/>
    <property type="match status" value="1"/>
</dbReference>
<dbReference type="Pfam" id="PF21216">
    <property type="entry name" value="PepQ_N"/>
    <property type="match status" value="1"/>
</dbReference>
<dbReference type="Pfam" id="PF00557">
    <property type="entry name" value="Peptidase_M24"/>
    <property type="match status" value="1"/>
</dbReference>
<dbReference type="SUPFAM" id="SSF55920">
    <property type="entry name" value="Creatinase/aminopeptidase"/>
    <property type="match status" value="1"/>
</dbReference>
<dbReference type="PROSITE" id="PS00491">
    <property type="entry name" value="PROLINE_PEPTIDASE"/>
    <property type="match status" value="1"/>
</dbReference>
<comment type="function">
    <text evidence="1">Splits dipeptides with a prolyl residue in the C-terminal position.</text>
</comment>
<comment type="catalytic activity">
    <reaction evidence="1">
        <text>Xaa-L-Pro dipeptide + H2O = an L-alpha-amino acid + L-proline</text>
        <dbReference type="Rhea" id="RHEA:76407"/>
        <dbReference type="ChEBI" id="CHEBI:15377"/>
        <dbReference type="ChEBI" id="CHEBI:59869"/>
        <dbReference type="ChEBI" id="CHEBI:60039"/>
        <dbReference type="ChEBI" id="CHEBI:195196"/>
        <dbReference type="EC" id="3.4.13.9"/>
    </reaction>
</comment>
<comment type="cofactor">
    <cofactor evidence="1">
        <name>Mn(2+)</name>
        <dbReference type="ChEBI" id="CHEBI:29035"/>
    </cofactor>
    <text evidence="1">Binds 2 manganese ions per subunit.</text>
</comment>
<comment type="similarity">
    <text evidence="1">Belongs to the peptidase M24B family. Bacterial-type prolidase subfamily.</text>
</comment>
<proteinExistence type="inferred from homology"/>
<evidence type="ECO:0000255" key="1">
    <source>
        <dbReference type="HAMAP-Rule" id="MF_01279"/>
    </source>
</evidence>
<gene>
    <name evidence="1" type="primary">pepQ</name>
    <name type="ordered locus">ECP_4060</name>
</gene>
<feature type="chain" id="PRO_0000303845" description="Xaa-Pro dipeptidase">
    <location>
        <begin position="1"/>
        <end position="443"/>
    </location>
</feature>
<feature type="binding site" evidence="1">
    <location>
        <position position="246"/>
    </location>
    <ligand>
        <name>Mn(2+)</name>
        <dbReference type="ChEBI" id="CHEBI:29035"/>
        <label>2</label>
    </ligand>
</feature>
<feature type="binding site" evidence="1">
    <location>
        <position position="257"/>
    </location>
    <ligand>
        <name>Mn(2+)</name>
        <dbReference type="ChEBI" id="CHEBI:29035"/>
        <label>1</label>
    </ligand>
</feature>
<feature type="binding site" evidence="1">
    <location>
        <position position="257"/>
    </location>
    <ligand>
        <name>Mn(2+)</name>
        <dbReference type="ChEBI" id="CHEBI:29035"/>
        <label>2</label>
    </ligand>
</feature>
<feature type="binding site" evidence="1">
    <location>
        <position position="339"/>
    </location>
    <ligand>
        <name>Mn(2+)</name>
        <dbReference type="ChEBI" id="CHEBI:29035"/>
        <label>1</label>
    </ligand>
</feature>
<feature type="binding site" evidence="1">
    <location>
        <position position="384"/>
    </location>
    <ligand>
        <name>Mn(2+)</name>
        <dbReference type="ChEBI" id="CHEBI:29035"/>
        <label>1</label>
    </ligand>
</feature>
<feature type="binding site" evidence="1">
    <location>
        <position position="423"/>
    </location>
    <ligand>
        <name>Mn(2+)</name>
        <dbReference type="ChEBI" id="CHEBI:29035"/>
        <label>1</label>
    </ligand>
</feature>
<feature type="binding site" evidence="1">
    <location>
        <position position="423"/>
    </location>
    <ligand>
        <name>Mn(2+)</name>
        <dbReference type="ChEBI" id="CHEBI:29035"/>
        <label>2</label>
    </ligand>
</feature>
<sequence>MESLASLYKNHIATLQERTRDALARFKLDALLIHSGELFNVFLDDHPYPFKVNPQFKAWVPVTQVPNCWLLVDGVNKPKLWFYLPVDYWHNVEPLPNSFWTEDVEVIALPKADGIGSLLPAARGNIGYIGPVPERALQLGIEASNINPKGVIDYLHYYRSFKTEYELACMREAQKMAVNGHRAAEEAFRSGMSEFDINIAYLTATGHRDTDVPYSNIVALNEHAAVLHYTKLDHQAPEEMRSFLLDAGAEYNGYAADLTRTWSAKSDNDYAQLVKDVNDEQLALIATMKAGVSYVDYHIQFHQRIAKLLRKHQIITDMSEEAMVENDLTGPFMPHGIGHPLGLQVHDVAGFMQDDSGTHLAAPAKYPYLRCTRILQPGMVLTIEPGIYFIESLLAPWREGQFSKHFNWQKIEALKPFGGIRIEDNVVIHENNVENMTRDLKLA</sequence>
<reference key="1">
    <citation type="journal article" date="2006" name="Mol. Microbiol.">
        <title>Role of pathogenicity island-associated integrases in the genome plasticity of uropathogenic Escherichia coli strain 536.</title>
        <authorList>
            <person name="Hochhut B."/>
            <person name="Wilde C."/>
            <person name="Balling G."/>
            <person name="Middendorf B."/>
            <person name="Dobrindt U."/>
            <person name="Brzuszkiewicz E."/>
            <person name="Gottschalk G."/>
            <person name="Carniel E."/>
            <person name="Hacker J."/>
        </authorList>
    </citation>
    <scope>NUCLEOTIDE SEQUENCE [LARGE SCALE GENOMIC DNA]</scope>
    <source>
        <strain>536 / UPEC</strain>
    </source>
</reference>
<accession>Q0TAK9</accession>
<name>PEPQ_ECOL5</name>